<reference key="1">
    <citation type="journal article" date="2000" name="Nature">
        <title>Genome sequence of the endocellular bacterial symbiont of aphids Buchnera sp. APS.</title>
        <authorList>
            <person name="Shigenobu S."/>
            <person name="Watanabe H."/>
            <person name="Hattori M."/>
            <person name="Sakaki Y."/>
            <person name="Ishikawa H."/>
        </authorList>
    </citation>
    <scope>NUCLEOTIDE SEQUENCE [LARGE SCALE GENOMIC DNA]</scope>
    <source>
        <strain>APS</strain>
    </source>
</reference>
<gene>
    <name type="primary">lpdA</name>
    <name type="ordered locus">BU207</name>
</gene>
<accession>P57303</accession>
<proteinExistence type="inferred from homology"/>
<sequence>MNKKIYTQVVVIGSGPAGYSAAFRCADLGLDTVLIERYDKLGGVCLNVGCIPSKTLLHIAKVIKEAKELHKTGVSFNKPDIDIKKIKNWKQHIVNKLTDGLSSMRKKRKIRIFQGHAIFETDKSLCVTNTEDKFTIFFDNAIIATGSKPIKIPSIPHDDIRIWDSTDALSLKKIPNNFLIIGSGIIGLEMATIYSALGSKVDIIDRFNHFLPVIDEDISSIYKKSINQQFNLMLNTHIDKVEVKKDALIVDMIHENIPKKNILYDAVLVAIGRTPNIDSLGLDRIGLKINNFGFIQVNNQLKTNIPHIYAIGDVAGTPMLAHKGVHEGHIAAEVISGKNHYFEPKVIPSIAYTDPEIAWVGLSEKEAKQENINYEVAIFPWNASGRAIASNCSIGKTKLIFNKQNNKIIGGSIVGSNAGELIGEVGLAIEMGCDAEDIALTIHAHPTLSESIGLSAEVFQGTVTDVLNFKLNK</sequence>
<organism>
    <name type="scientific">Buchnera aphidicola subsp. Acyrthosiphon pisum (strain APS)</name>
    <name type="common">Acyrthosiphon pisum symbiotic bacterium</name>
    <dbReference type="NCBI Taxonomy" id="107806"/>
    <lineage>
        <taxon>Bacteria</taxon>
        <taxon>Pseudomonadati</taxon>
        <taxon>Pseudomonadota</taxon>
        <taxon>Gammaproteobacteria</taxon>
        <taxon>Enterobacterales</taxon>
        <taxon>Erwiniaceae</taxon>
        <taxon>Buchnera</taxon>
    </lineage>
</organism>
<comment type="function">
    <text evidence="1">Lipoamide dehydrogenase is a component of the alpha-ketoacid dehydrogenase complexes.</text>
</comment>
<comment type="catalytic activity">
    <reaction>
        <text>N(6)-[(R)-dihydrolipoyl]-L-lysyl-[protein] + NAD(+) = N(6)-[(R)-lipoyl]-L-lysyl-[protein] + NADH + H(+)</text>
        <dbReference type="Rhea" id="RHEA:15045"/>
        <dbReference type="Rhea" id="RHEA-COMP:10474"/>
        <dbReference type="Rhea" id="RHEA-COMP:10475"/>
        <dbReference type="ChEBI" id="CHEBI:15378"/>
        <dbReference type="ChEBI" id="CHEBI:57540"/>
        <dbReference type="ChEBI" id="CHEBI:57945"/>
        <dbReference type="ChEBI" id="CHEBI:83099"/>
        <dbReference type="ChEBI" id="CHEBI:83100"/>
        <dbReference type="EC" id="1.8.1.4"/>
    </reaction>
</comment>
<comment type="cofactor">
    <cofactor evidence="1">
        <name>FAD</name>
        <dbReference type="ChEBI" id="CHEBI:57692"/>
    </cofactor>
    <text evidence="1">Binds 1 FAD per subunit.</text>
</comment>
<comment type="subunit">
    <text evidence="1">Homodimer.</text>
</comment>
<comment type="subcellular location">
    <subcellularLocation>
        <location evidence="1">Cytoplasm</location>
    </subcellularLocation>
</comment>
<comment type="miscellaneous">
    <text evidence="1">The active site is a redox-active disulfide bond.</text>
</comment>
<comment type="similarity">
    <text evidence="2">Belongs to the class-I pyridine nucleotide-disulfide oxidoreductase family.</text>
</comment>
<dbReference type="EC" id="1.8.1.4"/>
<dbReference type="EMBL" id="BA000003">
    <property type="protein sequence ID" value="BAB12924.1"/>
    <property type="molecule type" value="Genomic_DNA"/>
</dbReference>
<dbReference type="RefSeq" id="NP_240038.1">
    <property type="nucleotide sequence ID" value="NC_002528.1"/>
</dbReference>
<dbReference type="RefSeq" id="WP_009874164.1">
    <property type="nucleotide sequence ID" value="NZ_AP036055.1"/>
</dbReference>
<dbReference type="SMR" id="P57303"/>
<dbReference type="STRING" id="563178.BUAP5A_204"/>
<dbReference type="EnsemblBacteria" id="BAB12924">
    <property type="protein sequence ID" value="BAB12924"/>
    <property type="gene ID" value="BAB12924"/>
</dbReference>
<dbReference type="KEGG" id="buc:BU207"/>
<dbReference type="PATRIC" id="fig|107806.10.peg.218"/>
<dbReference type="eggNOG" id="COG1249">
    <property type="taxonomic scope" value="Bacteria"/>
</dbReference>
<dbReference type="HOGENOM" id="CLU_016755_0_3_6"/>
<dbReference type="Proteomes" id="UP000001806">
    <property type="component" value="Chromosome"/>
</dbReference>
<dbReference type="GO" id="GO:0005737">
    <property type="term" value="C:cytoplasm"/>
    <property type="evidence" value="ECO:0007669"/>
    <property type="project" value="UniProtKB-SubCell"/>
</dbReference>
<dbReference type="GO" id="GO:0004148">
    <property type="term" value="F:dihydrolipoyl dehydrogenase (NADH) activity"/>
    <property type="evidence" value="ECO:0007669"/>
    <property type="project" value="UniProtKB-EC"/>
</dbReference>
<dbReference type="GO" id="GO:0050660">
    <property type="term" value="F:flavin adenine dinucleotide binding"/>
    <property type="evidence" value="ECO:0007669"/>
    <property type="project" value="InterPro"/>
</dbReference>
<dbReference type="GO" id="GO:0006103">
    <property type="term" value="P:2-oxoglutarate metabolic process"/>
    <property type="evidence" value="ECO:0007669"/>
    <property type="project" value="TreeGrafter"/>
</dbReference>
<dbReference type="FunFam" id="3.30.390.30:FF:000001">
    <property type="entry name" value="Dihydrolipoyl dehydrogenase"/>
    <property type="match status" value="1"/>
</dbReference>
<dbReference type="Gene3D" id="3.30.390.30">
    <property type="match status" value="1"/>
</dbReference>
<dbReference type="Gene3D" id="3.50.50.60">
    <property type="entry name" value="FAD/NAD(P)-binding domain"/>
    <property type="match status" value="2"/>
</dbReference>
<dbReference type="InterPro" id="IPR050151">
    <property type="entry name" value="Class-I_Pyr_Nuc-Dis_Oxidored"/>
</dbReference>
<dbReference type="InterPro" id="IPR036188">
    <property type="entry name" value="FAD/NAD-bd_sf"/>
</dbReference>
<dbReference type="InterPro" id="IPR023753">
    <property type="entry name" value="FAD/NAD-binding_dom"/>
</dbReference>
<dbReference type="InterPro" id="IPR016156">
    <property type="entry name" value="FAD/NAD-linked_Rdtase_dimer_sf"/>
</dbReference>
<dbReference type="InterPro" id="IPR006258">
    <property type="entry name" value="Lipoamide_DH"/>
</dbReference>
<dbReference type="InterPro" id="IPR001100">
    <property type="entry name" value="Pyr_nuc-diS_OxRdtase"/>
</dbReference>
<dbReference type="InterPro" id="IPR004099">
    <property type="entry name" value="Pyr_nucl-diS_OxRdtase_dimer"/>
</dbReference>
<dbReference type="InterPro" id="IPR012999">
    <property type="entry name" value="Pyr_OxRdtase_I_AS"/>
</dbReference>
<dbReference type="NCBIfam" id="TIGR01350">
    <property type="entry name" value="lipoamide_DH"/>
    <property type="match status" value="1"/>
</dbReference>
<dbReference type="PANTHER" id="PTHR22912:SF160">
    <property type="entry name" value="DIHYDROLIPOYL DEHYDROGENASE"/>
    <property type="match status" value="1"/>
</dbReference>
<dbReference type="PANTHER" id="PTHR22912">
    <property type="entry name" value="DISULFIDE OXIDOREDUCTASE"/>
    <property type="match status" value="1"/>
</dbReference>
<dbReference type="Pfam" id="PF07992">
    <property type="entry name" value="Pyr_redox_2"/>
    <property type="match status" value="1"/>
</dbReference>
<dbReference type="Pfam" id="PF02852">
    <property type="entry name" value="Pyr_redox_dim"/>
    <property type="match status" value="1"/>
</dbReference>
<dbReference type="PIRSF" id="PIRSF000350">
    <property type="entry name" value="Mercury_reductase_MerA"/>
    <property type="match status" value="1"/>
</dbReference>
<dbReference type="PRINTS" id="PR00368">
    <property type="entry name" value="FADPNR"/>
</dbReference>
<dbReference type="PRINTS" id="PR00411">
    <property type="entry name" value="PNDRDTASEI"/>
</dbReference>
<dbReference type="SUPFAM" id="SSF51905">
    <property type="entry name" value="FAD/NAD(P)-binding domain"/>
    <property type="match status" value="1"/>
</dbReference>
<dbReference type="SUPFAM" id="SSF55424">
    <property type="entry name" value="FAD/NAD-linked reductases, dimerisation (C-terminal) domain"/>
    <property type="match status" value="1"/>
</dbReference>
<dbReference type="PROSITE" id="PS00076">
    <property type="entry name" value="PYRIDINE_REDOX_1"/>
    <property type="match status" value="1"/>
</dbReference>
<name>DLDH_BUCAI</name>
<protein>
    <recommendedName>
        <fullName>Dihydrolipoyl dehydrogenase</fullName>
        <ecNumber>1.8.1.4</ecNumber>
    </recommendedName>
    <alternativeName>
        <fullName>Dihydrolipoamide dehydrogenase</fullName>
    </alternativeName>
    <alternativeName>
        <fullName>E3 component of pyruvate and 2-oxoglutarate dehydrogenases complexes</fullName>
    </alternativeName>
</protein>
<feature type="chain" id="PRO_0000068019" description="Dihydrolipoyl dehydrogenase">
    <location>
        <begin position="1"/>
        <end position="473"/>
    </location>
</feature>
<feature type="active site" description="Proton acceptor" evidence="1">
    <location>
        <position position="445"/>
    </location>
</feature>
<feature type="binding site" evidence="1">
    <location>
        <begin position="36"/>
        <end position="45"/>
    </location>
    <ligand>
        <name>FAD</name>
        <dbReference type="ChEBI" id="CHEBI:57692"/>
    </ligand>
</feature>
<feature type="binding site" evidence="1">
    <location>
        <position position="54"/>
    </location>
    <ligand>
        <name>FAD</name>
        <dbReference type="ChEBI" id="CHEBI:57692"/>
    </ligand>
</feature>
<feature type="binding site" evidence="1">
    <location>
        <position position="117"/>
    </location>
    <ligand>
        <name>FAD</name>
        <dbReference type="ChEBI" id="CHEBI:57692"/>
    </ligand>
</feature>
<feature type="binding site" evidence="1">
    <location>
        <begin position="182"/>
        <end position="186"/>
    </location>
    <ligand>
        <name>NAD(+)</name>
        <dbReference type="ChEBI" id="CHEBI:57540"/>
    </ligand>
</feature>
<feature type="binding site" evidence="1">
    <location>
        <position position="205"/>
    </location>
    <ligand>
        <name>NAD(+)</name>
        <dbReference type="ChEBI" id="CHEBI:57540"/>
    </ligand>
</feature>
<feature type="binding site" evidence="1">
    <location>
        <begin position="270"/>
        <end position="273"/>
    </location>
    <ligand>
        <name>NAD(+)</name>
        <dbReference type="ChEBI" id="CHEBI:57540"/>
    </ligand>
</feature>
<feature type="binding site" evidence="1">
    <location>
        <position position="313"/>
    </location>
    <ligand>
        <name>FAD</name>
        <dbReference type="ChEBI" id="CHEBI:57692"/>
    </ligand>
</feature>
<feature type="binding site" evidence="1">
    <location>
        <position position="321"/>
    </location>
    <ligand>
        <name>FAD</name>
        <dbReference type="ChEBI" id="CHEBI:57692"/>
    </ligand>
</feature>
<feature type="disulfide bond" description="Redox-active" evidence="1">
    <location>
        <begin position="45"/>
        <end position="50"/>
    </location>
</feature>
<evidence type="ECO:0000250" key="1"/>
<evidence type="ECO:0000305" key="2"/>
<keyword id="KW-0963">Cytoplasm</keyword>
<keyword id="KW-1015">Disulfide bond</keyword>
<keyword id="KW-0274">FAD</keyword>
<keyword id="KW-0285">Flavoprotein</keyword>
<keyword id="KW-0520">NAD</keyword>
<keyword id="KW-0560">Oxidoreductase</keyword>
<keyword id="KW-0676">Redox-active center</keyword>
<keyword id="KW-1185">Reference proteome</keyword>